<sequence length="37" mass="4577">MKVRASVRKICEHCRLIRRRRKVMIICFNPKHKQRQG</sequence>
<proteinExistence type="inferred from homology"/>
<dbReference type="EMBL" id="DQ229107">
    <property type="protein sequence ID" value="ABA61983.1"/>
    <property type="molecule type" value="Genomic_DNA"/>
</dbReference>
<dbReference type="RefSeq" id="YP_635782.1">
    <property type="nucleotide sequence ID" value="NC_008097.1"/>
</dbReference>
<dbReference type="SMR" id="Q1ACG5"/>
<dbReference type="GeneID" id="4100253"/>
<dbReference type="GO" id="GO:0009507">
    <property type="term" value="C:chloroplast"/>
    <property type="evidence" value="ECO:0007669"/>
    <property type="project" value="UniProtKB-SubCell"/>
</dbReference>
<dbReference type="GO" id="GO:1990904">
    <property type="term" value="C:ribonucleoprotein complex"/>
    <property type="evidence" value="ECO:0007669"/>
    <property type="project" value="UniProtKB-KW"/>
</dbReference>
<dbReference type="GO" id="GO:0005840">
    <property type="term" value="C:ribosome"/>
    <property type="evidence" value="ECO:0007669"/>
    <property type="project" value="UniProtKB-KW"/>
</dbReference>
<dbReference type="GO" id="GO:0003735">
    <property type="term" value="F:structural constituent of ribosome"/>
    <property type="evidence" value="ECO:0007669"/>
    <property type="project" value="InterPro"/>
</dbReference>
<dbReference type="GO" id="GO:0006412">
    <property type="term" value="P:translation"/>
    <property type="evidence" value="ECO:0007669"/>
    <property type="project" value="UniProtKB-UniRule"/>
</dbReference>
<dbReference type="HAMAP" id="MF_00251">
    <property type="entry name" value="Ribosomal_bL36"/>
    <property type="match status" value="1"/>
</dbReference>
<dbReference type="InterPro" id="IPR000473">
    <property type="entry name" value="Ribosomal_bL36"/>
</dbReference>
<dbReference type="InterPro" id="IPR035977">
    <property type="entry name" value="Ribosomal_bL36_sp"/>
</dbReference>
<dbReference type="NCBIfam" id="TIGR01022">
    <property type="entry name" value="rpmJ_bact"/>
    <property type="match status" value="1"/>
</dbReference>
<dbReference type="PANTHER" id="PTHR42888">
    <property type="entry name" value="50S RIBOSOMAL PROTEIN L36, CHLOROPLASTIC"/>
    <property type="match status" value="1"/>
</dbReference>
<dbReference type="PANTHER" id="PTHR42888:SF1">
    <property type="entry name" value="LARGE RIBOSOMAL SUBUNIT PROTEIN BL36C"/>
    <property type="match status" value="1"/>
</dbReference>
<dbReference type="Pfam" id="PF00444">
    <property type="entry name" value="Ribosomal_L36"/>
    <property type="match status" value="1"/>
</dbReference>
<dbReference type="SUPFAM" id="SSF57840">
    <property type="entry name" value="Ribosomal protein L36"/>
    <property type="match status" value="1"/>
</dbReference>
<dbReference type="PROSITE" id="PS00828">
    <property type="entry name" value="RIBOSOMAL_L36"/>
    <property type="match status" value="1"/>
</dbReference>
<accession>Q1ACG5</accession>
<gene>
    <name evidence="1" type="primary">rpl36</name>
</gene>
<comment type="subcellular location">
    <subcellularLocation>
        <location>Plastid</location>
        <location>Chloroplast</location>
    </subcellularLocation>
</comment>
<comment type="similarity">
    <text evidence="1">Belongs to the bacterial ribosomal protein bL36 family.</text>
</comment>
<keyword id="KW-0150">Chloroplast</keyword>
<keyword id="KW-0934">Plastid</keyword>
<keyword id="KW-0687">Ribonucleoprotein</keyword>
<keyword id="KW-0689">Ribosomal protein</keyword>
<evidence type="ECO:0000255" key="1">
    <source>
        <dbReference type="HAMAP-Rule" id="MF_00251"/>
    </source>
</evidence>
<evidence type="ECO:0000305" key="2"/>
<reference key="1">
    <citation type="journal article" date="2006" name="Mol. Biol. Evol.">
        <title>The chloroplast genome sequence of Chara vulgaris sheds new light into the closest green algal relatives of land plants.</title>
        <authorList>
            <person name="Turmel M."/>
            <person name="Otis C."/>
            <person name="Lemieux C."/>
        </authorList>
    </citation>
    <scope>NUCLEOTIDE SEQUENCE [LARGE SCALE GENOMIC DNA]</scope>
</reference>
<geneLocation type="chloroplast"/>
<name>RK36_CHAVU</name>
<protein>
    <recommendedName>
        <fullName evidence="1">Large ribosomal subunit protein bL36c</fullName>
    </recommendedName>
    <alternativeName>
        <fullName evidence="2">50S ribosomal protein L36, chloroplastic</fullName>
    </alternativeName>
</protein>
<organism>
    <name type="scientific">Chara vulgaris</name>
    <name type="common">Common stonewort</name>
    <dbReference type="NCBI Taxonomy" id="55564"/>
    <lineage>
        <taxon>Eukaryota</taxon>
        <taxon>Viridiplantae</taxon>
        <taxon>Streptophyta</taxon>
        <taxon>Charophyceae</taxon>
        <taxon>Charales</taxon>
        <taxon>Characeae</taxon>
        <taxon>Chara</taxon>
    </lineage>
</organism>
<feature type="chain" id="PRO_0000276810" description="Large ribosomal subunit protein bL36c">
    <location>
        <begin position="1"/>
        <end position="37"/>
    </location>
</feature>